<reference key="1">
    <citation type="journal article" date="1999" name="J. Bacteriol.">
        <title>Isolation and characterization of the nikR gene encoding a nickel-responsive regulator in Escherichia coli.</title>
        <authorList>
            <person name="De Pina K."/>
            <person name="Desjardin V."/>
            <person name="Mandrand-Berthelot M.-A."/>
            <person name="Giordano G."/>
            <person name="Wu L.-F."/>
        </authorList>
    </citation>
    <scope>NUCLEOTIDE SEQUENCE [GENOMIC DNA]</scope>
    <scope>PROTEIN SEQUENCE OF 1-7</scope>
    <scope>CHARACTERIZATION</scope>
</reference>
<reference key="2">
    <citation type="journal article" date="1993" name="J. Bacteriol.">
        <title>Rhs elements of Escherichia coli K-12: complex composites of shared and unique components that have different evolutionary histories.</title>
        <authorList>
            <person name="Zhao S."/>
            <person name="Sandt C.H."/>
            <person name="Feulner G."/>
            <person name="Vlazny D.A."/>
            <person name="Gray J.A."/>
            <person name="Hill C.W."/>
        </authorList>
    </citation>
    <scope>NUCLEOTIDE SEQUENCE [GENOMIC DNA]</scope>
    <source>
        <strain>K12</strain>
    </source>
</reference>
<reference key="3">
    <citation type="journal article" date="1994" name="Nucleic Acids Res.">
        <title>Analysis of the Escherichia coli genome. V. DNA sequence of the region from 76.0 to 81.5 minutes.</title>
        <authorList>
            <person name="Sofia H.J."/>
            <person name="Burland V."/>
            <person name="Daniels D.L."/>
            <person name="Plunkett G. III"/>
            <person name="Blattner F.R."/>
        </authorList>
    </citation>
    <scope>NUCLEOTIDE SEQUENCE [LARGE SCALE GENOMIC DNA]</scope>
    <source>
        <strain>K12 / MG1655 / ATCC 47076</strain>
    </source>
</reference>
<reference key="4">
    <citation type="journal article" date="1997" name="Science">
        <title>The complete genome sequence of Escherichia coli K-12.</title>
        <authorList>
            <person name="Blattner F.R."/>
            <person name="Plunkett G. III"/>
            <person name="Bloch C.A."/>
            <person name="Perna N.T."/>
            <person name="Burland V."/>
            <person name="Riley M."/>
            <person name="Collado-Vides J."/>
            <person name="Glasner J.D."/>
            <person name="Rode C.K."/>
            <person name="Mayhew G.F."/>
            <person name="Gregor J."/>
            <person name="Davis N.W."/>
            <person name="Kirkpatrick H.A."/>
            <person name="Goeden M.A."/>
            <person name="Rose D.J."/>
            <person name="Mau B."/>
            <person name="Shao Y."/>
        </authorList>
    </citation>
    <scope>NUCLEOTIDE SEQUENCE [LARGE SCALE GENOMIC DNA]</scope>
    <source>
        <strain>K12 / MG1655 / ATCC 47076</strain>
    </source>
</reference>
<reference key="5">
    <citation type="journal article" date="2006" name="Mol. Syst. Biol.">
        <title>Highly accurate genome sequences of Escherichia coli K-12 strains MG1655 and W3110.</title>
        <authorList>
            <person name="Hayashi K."/>
            <person name="Morooka N."/>
            <person name="Yamamoto Y."/>
            <person name="Fujita K."/>
            <person name="Isono K."/>
            <person name="Choi S."/>
            <person name="Ohtsubo E."/>
            <person name="Baba T."/>
            <person name="Wanner B.L."/>
            <person name="Mori H."/>
            <person name="Horiuchi T."/>
        </authorList>
    </citation>
    <scope>NUCLEOTIDE SEQUENCE [LARGE SCALE GENOMIC DNA]</scope>
    <source>
        <strain>K12 / W3110 / ATCC 27325 / DSM 5911</strain>
    </source>
</reference>
<reference key="6">
    <citation type="journal article" date="1994" name="Biosci. Biotechnol. Biochem.">
        <title>Analysis of products of the Escherichia coli genomic genes and regulation of their expressions: an applicable procedure for genomic analysis of other microorganisms.</title>
        <authorList>
            <person name="Talukder A.A."/>
            <person name="Yanai S."/>
            <person name="Yamada M."/>
        </authorList>
    </citation>
    <scope>NUCLEOTIDE SEQUENCE [GENOMIC DNA] OF 101-133</scope>
    <source>
        <strain>K12 / W3110 / ATCC 27325 / DSM 5911</strain>
    </source>
</reference>
<reference key="7">
    <citation type="journal article" date="1999" name="Protein Sci.">
        <title>NikR is a ribbon-helix-helix DNA-binding protein.</title>
        <authorList>
            <person name="Chivers P.T."/>
            <person name="Sauer R.T."/>
        </authorList>
    </citation>
    <scope>CHARACTERIZATION</scope>
    <scope>MUTAGENESIS OF ARG-3</scope>
    <source>
        <strain>K12 / MC1061 / ATCC 53338 / DSM 7140</strain>
    </source>
</reference>
<reference key="8">
    <citation type="journal article" date="2000" name="J. Biol. Chem.">
        <title>Regulation of high affinity nickel uptake in bacteria. Ni2+-dependent interaction of NikR with wild-type and mutant operator sites.</title>
        <authorList>
            <person name="Chivers P.T."/>
            <person name="Sauer R.T."/>
        </authorList>
    </citation>
    <scope>CHARACTERIZATION</scope>
    <source>
        <strain>K12 / MC1061 / ATCC 53338 / DSM 7140</strain>
    </source>
</reference>
<reference key="9">
    <citation type="journal article" date="2003" name="Nat. Struct. Biol.">
        <title>Crystal structure of the nickel-responsive transcription factor NikR.</title>
        <authorList>
            <person name="Schreiter E.R."/>
            <person name="Sintchak M.D."/>
            <person name="Guo Y."/>
            <person name="Chivers P.T."/>
            <person name="Sauer R.T."/>
            <person name="Drennan C.L."/>
        </authorList>
    </citation>
    <scope>X-RAY CRYSTALLOGRAPHY (1.4 ANGSTROMS)</scope>
</reference>
<dbReference type="EMBL" id="Y08952">
    <property type="protein sequence ID" value="CAA70150.1"/>
    <property type="molecule type" value="Genomic_DNA"/>
</dbReference>
<dbReference type="EMBL" id="L02370">
    <property type="protein sequence ID" value="AAC61882.1"/>
    <property type="molecule type" value="Genomic_DNA"/>
</dbReference>
<dbReference type="EMBL" id="U00039">
    <property type="protein sequence ID" value="AAB18456.1"/>
    <property type="molecule type" value="Genomic_DNA"/>
</dbReference>
<dbReference type="EMBL" id="U00096">
    <property type="protein sequence ID" value="AAC76506.1"/>
    <property type="molecule type" value="Genomic_DNA"/>
</dbReference>
<dbReference type="EMBL" id="AP009048">
    <property type="protein sequence ID" value="BAE77812.1"/>
    <property type="molecule type" value="Genomic_DNA"/>
</dbReference>
<dbReference type="EMBL" id="D21140">
    <property type="protein sequence ID" value="BAA04676.1"/>
    <property type="status" value="ALT_INIT"/>
    <property type="molecule type" value="Genomic_DNA"/>
</dbReference>
<dbReference type="PIR" id="S47700">
    <property type="entry name" value="S47700"/>
</dbReference>
<dbReference type="RefSeq" id="NP_417938.1">
    <property type="nucleotide sequence ID" value="NC_000913.3"/>
</dbReference>
<dbReference type="RefSeq" id="WP_001190062.1">
    <property type="nucleotide sequence ID" value="NZ_STEB01000004.1"/>
</dbReference>
<dbReference type="PDB" id="1Q5V">
    <property type="method" value="X-ray"/>
    <property type="resolution" value="2.30 A"/>
    <property type="chains" value="A/B/C/D=1-133"/>
</dbReference>
<dbReference type="PDB" id="1Q5Y">
    <property type="method" value="X-ray"/>
    <property type="resolution" value="1.40 A"/>
    <property type="chains" value="A/B/C/D=49-133"/>
</dbReference>
<dbReference type="PDB" id="2HZA">
    <property type="method" value="X-ray"/>
    <property type="resolution" value="2.10 A"/>
    <property type="chains" value="A/B=1-133"/>
</dbReference>
<dbReference type="PDB" id="2HZV">
    <property type="method" value="X-ray"/>
    <property type="resolution" value="3.10 A"/>
    <property type="chains" value="A/B/C/D/E/F/G/H=1-133"/>
</dbReference>
<dbReference type="PDB" id="3BKF">
    <property type="method" value="X-ray"/>
    <property type="resolution" value="1.90 A"/>
    <property type="chains" value="A=48-133"/>
</dbReference>
<dbReference type="PDB" id="3BKT">
    <property type="method" value="X-ray"/>
    <property type="resolution" value="1.50 A"/>
    <property type="chains" value="A/B/C/D=48-133"/>
</dbReference>
<dbReference type="PDB" id="3BKU">
    <property type="method" value="X-ray"/>
    <property type="resolution" value="2.10 A"/>
    <property type="chains" value="A/B/C/D=48-133"/>
</dbReference>
<dbReference type="PDB" id="3OD2">
    <property type="method" value="X-ray"/>
    <property type="resolution" value="2.60 A"/>
    <property type="chains" value="A/B=1-133"/>
</dbReference>
<dbReference type="PDBsum" id="1Q5V"/>
<dbReference type="PDBsum" id="1Q5Y"/>
<dbReference type="PDBsum" id="2HZA"/>
<dbReference type="PDBsum" id="2HZV"/>
<dbReference type="PDBsum" id="3BKF"/>
<dbReference type="PDBsum" id="3BKT"/>
<dbReference type="PDBsum" id="3BKU"/>
<dbReference type="PDBsum" id="3OD2"/>
<dbReference type="SMR" id="P0A6Z6"/>
<dbReference type="BioGRID" id="4262509">
    <property type="interactions" value="66"/>
</dbReference>
<dbReference type="BioGRID" id="852304">
    <property type="interactions" value="12"/>
</dbReference>
<dbReference type="DIP" id="DIP-48066N"/>
<dbReference type="FunCoup" id="P0A6Z6">
    <property type="interactions" value="70"/>
</dbReference>
<dbReference type="IntAct" id="P0A6Z6">
    <property type="interactions" value="15"/>
</dbReference>
<dbReference type="STRING" id="511145.b3481"/>
<dbReference type="jPOST" id="P0A6Z6"/>
<dbReference type="PaxDb" id="511145-b3481"/>
<dbReference type="EnsemblBacteria" id="AAC76506">
    <property type="protein sequence ID" value="AAC76506"/>
    <property type="gene ID" value="b3481"/>
</dbReference>
<dbReference type="GeneID" id="93778510"/>
<dbReference type="GeneID" id="947995"/>
<dbReference type="KEGG" id="ecj:JW3446"/>
<dbReference type="KEGG" id="eco:b3481"/>
<dbReference type="KEGG" id="ecoc:C3026_18850"/>
<dbReference type="PATRIC" id="fig|1411691.4.peg.3244"/>
<dbReference type="EchoBASE" id="EB1481"/>
<dbReference type="eggNOG" id="COG0864">
    <property type="taxonomic scope" value="Bacteria"/>
</dbReference>
<dbReference type="HOGENOM" id="CLU_113319_1_4_6"/>
<dbReference type="InParanoid" id="P0A6Z6"/>
<dbReference type="OMA" id="HDNCLEV"/>
<dbReference type="OrthoDB" id="9806294at2"/>
<dbReference type="PhylomeDB" id="P0A6Z6"/>
<dbReference type="BioCyc" id="EcoCyc:EG11519-MONOMER"/>
<dbReference type="EvolutionaryTrace" id="P0A6Z6"/>
<dbReference type="PRO" id="PR:P0A6Z6"/>
<dbReference type="Proteomes" id="UP000000625">
    <property type="component" value="Chromosome"/>
</dbReference>
<dbReference type="CollecTF" id="EXPREG_00000790"/>
<dbReference type="GO" id="GO:0032993">
    <property type="term" value="C:protein-DNA complex"/>
    <property type="evidence" value="ECO:0000315"/>
    <property type="project" value="CollecTF"/>
</dbReference>
<dbReference type="GO" id="GO:0005667">
    <property type="term" value="C:transcription regulator complex"/>
    <property type="evidence" value="ECO:0000314"/>
    <property type="project" value="EcoCyc"/>
</dbReference>
<dbReference type="GO" id="GO:0001046">
    <property type="term" value="F:core promoter sequence-specific DNA binding"/>
    <property type="evidence" value="ECO:0000314"/>
    <property type="project" value="EcoCyc"/>
</dbReference>
<dbReference type="GO" id="GO:0003677">
    <property type="term" value="F:DNA binding"/>
    <property type="evidence" value="ECO:0000318"/>
    <property type="project" value="GO_Central"/>
</dbReference>
<dbReference type="GO" id="GO:0001217">
    <property type="term" value="F:DNA-binding transcription repressor activity"/>
    <property type="evidence" value="ECO:0000315"/>
    <property type="project" value="CollecTF"/>
</dbReference>
<dbReference type="GO" id="GO:0042802">
    <property type="term" value="F:identical protein binding"/>
    <property type="evidence" value="ECO:0000314"/>
    <property type="project" value="EcoCyc"/>
</dbReference>
<dbReference type="GO" id="GO:0016151">
    <property type="term" value="F:nickel cation binding"/>
    <property type="evidence" value="ECO:0000314"/>
    <property type="project" value="EcoCyc"/>
</dbReference>
<dbReference type="GO" id="GO:0043565">
    <property type="term" value="F:sequence-specific DNA binding"/>
    <property type="evidence" value="ECO:0000315"/>
    <property type="project" value="CollecTF"/>
</dbReference>
<dbReference type="GO" id="GO:0000976">
    <property type="term" value="F:transcription cis-regulatory region binding"/>
    <property type="evidence" value="ECO:0000315"/>
    <property type="project" value="CollecTF"/>
</dbReference>
<dbReference type="GO" id="GO:2000143">
    <property type="term" value="P:negative regulation of DNA-templated transcription initiation"/>
    <property type="evidence" value="ECO:0000315"/>
    <property type="project" value="EcoCyc"/>
</dbReference>
<dbReference type="GO" id="GO:0006355">
    <property type="term" value="P:regulation of DNA-templated transcription"/>
    <property type="evidence" value="ECO:0000318"/>
    <property type="project" value="GO_Central"/>
</dbReference>
<dbReference type="GO" id="GO:0010045">
    <property type="term" value="P:response to nickel cation"/>
    <property type="evidence" value="ECO:0007669"/>
    <property type="project" value="InterPro"/>
</dbReference>
<dbReference type="CDD" id="cd22231">
    <property type="entry name" value="RHH_NikR_HicB-like"/>
    <property type="match status" value="1"/>
</dbReference>
<dbReference type="FunFam" id="1.10.1220.10:FF:000001">
    <property type="entry name" value="Nickel-responsive regulator"/>
    <property type="match status" value="1"/>
</dbReference>
<dbReference type="FunFam" id="3.30.70.1150:FF:000002">
    <property type="entry name" value="Nickel-responsive regulator"/>
    <property type="match status" value="1"/>
</dbReference>
<dbReference type="Gene3D" id="3.30.70.1150">
    <property type="entry name" value="ACT-like. Chain A, domain 2"/>
    <property type="match status" value="1"/>
</dbReference>
<dbReference type="Gene3D" id="1.10.1220.10">
    <property type="entry name" value="Met repressor-like"/>
    <property type="match status" value="1"/>
</dbReference>
<dbReference type="HAMAP" id="MF_00476">
    <property type="entry name" value="NikR"/>
    <property type="match status" value="1"/>
</dbReference>
<dbReference type="InterPro" id="IPR027271">
    <property type="entry name" value="Acetolactate_synth/TF_NikR_C"/>
</dbReference>
<dbReference type="InterPro" id="IPR045865">
    <property type="entry name" value="ACT-like_dom_sf"/>
</dbReference>
<dbReference type="InterPro" id="IPR013321">
    <property type="entry name" value="Arc_rbn_hlx_hlx"/>
</dbReference>
<dbReference type="InterPro" id="IPR002145">
    <property type="entry name" value="CopG"/>
</dbReference>
<dbReference type="InterPro" id="IPR050192">
    <property type="entry name" value="CopG/NikR_regulator"/>
</dbReference>
<dbReference type="InterPro" id="IPR022988">
    <property type="entry name" value="Ni_resp_reg_NikR"/>
</dbReference>
<dbReference type="InterPro" id="IPR014160">
    <property type="entry name" value="Nickel_NikR_proteobac"/>
</dbReference>
<dbReference type="InterPro" id="IPR010985">
    <property type="entry name" value="Ribbon_hlx_hlx"/>
</dbReference>
<dbReference type="InterPro" id="IPR014864">
    <property type="entry name" value="TF_NikR_Ni-bd_C"/>
</dbReference>
<dbReference type="NCBIfam" id="TIGR02793">
    <property type="entry name" value="nikR"/>
    <property type="match status" value="1"/>
</dbReference>
<dbReference type="NCBIfam" id="NF002815">
    <property type="entry name" value="PRK02967.1"/>
    <property type="match status" value="1"/>
</dbReference>
<dbReference type="NCBIfam" id="NF003381">
    <property type="entry name" value="PRK04460.1"/>
    <property type="match status" value="1"/>
</dbReference>
<dbReference type="PANTHER" id="PTHR34719">
    <property type="entry name" value="NICKEL-RESPONSIVE REGULATOR"/>
    <property type="match status" value="1"/>
</dbReference>
<dbReference type="PANTHER" id="PTHR34719:SF2">
    <property type="entry name" value="NICKEL-RESPONSIVE REGULATOR"/>
    <property type="match status" value="1"/>
</dbReference>
<dbReference type="Pfam" id="PF08753">
    <property type="entry name" value="NikR_C"/>
    <property type="match status" value="1"/>
</dbReference>
<dbReference type="Pfam" id="PF01402">
    <property type="entry name" value="RHH_1"/>
    <property type="match status" value="1"/>
</dbReference>
<dbReference type="SUPFAM" id="SSF55021">
    <property type="entry name" value="ACT-like"/>
    <property type="match status" value="1"/>
</dbReference>
<dbReference type="SUPFAM" id="SSF47598">
    <property type="entry name" value="Ribbon-helix-helix"/>
    <property type="match status" value="1"/>
</dbReference>
<keyword id="KW-0002">3D-structure</keyword>
<keyword id="KW-0903">Direct protein sequencing</keyword>
<keyword id="KW-0238">DNA-binding</keyword>
<keyword id="KW-0479">Metal-binding</keyword>
<keyword id="KW-0533">Nickel</keyword>
<keyword id="KW-1185">Reference proteome</keyword>
<keyword id="KW-0678">Repressor</keyword>
<keyword id="KW-0804">Transcription</keyword>
<keyword id="KW-0805">Transcription regulation</keyword>
<sequence>MQRVTITLDDDLLETLDSLSQRRGYNNRSEAIRDILRSALAQEATQQHGTQGFAVLSYVYEHEKRDLASRIVSTQHHHHDLSVATLHVHINHDDCLEIAVLKGDMGDVQHFADDVIAQRGVRHGHLQCLPKED</sequence>
<gene>
    <name type="primary">nikR</name>
    <name type="synonym">yhhG</name>
    <name type="ordered locus">b3481</name>
    <name type="ordered locus">JW3446</name>
</gene>
<accession>P0A6Z6</accession>
<accession>P28910</accession>
<accession>Q2M7E4</accession>
<accession>Q47559</accession>
<name>NIKR_ECOLI</name>
<comment type="function">
    <text>Transcriptional repressor of the nikABCDE operon. Is active in the presence of excessive concentrations of intracellular nickel.</text>
</comment>
<comment type="cofactor">
    <cofactor>
        <name>Ni(2+)</name>
        <dbReference type="ChEBI" id="CHEBI:49786"/>
    </cofactor>
    <text>Binds 1 nickel ion per subunit.</text>
</comment>
<comment type="subunit">
    <text>Homotetramer.</text>
</comment>
<comment type="interaction">
    <interactant intactId="EBI-562488">
        <id>P0A6Z6</id>
    </interactant>
    <interactant intactId="EBI-1129389">
        <id>P77650</id>
        <label>hcaD</label>
    </interactant>
    <organismsDiffer>false</organismsDiffer>
    <experiments>2</experiments>
</comment>
<comment type="interaction">
    <interactant intactId="EBI-562488">
        <id>P0A6Z6</id>
    </interactant>
    <interactant intactId="EBI-543702">
        <id>P0A7K2</id>
        <label>rplL</label>
    </interactant>
    <organismsDiffer>false</organismsDiffer>
    <experiments>3</experiments>
</comment>
<comment type="interaction">
    <interactant intactId="EBI-562488">
        <id>P0A6Z6</id>
    </interactant>
    <interactant intactId="EBI-301077">
        <id>P0CE47</id>
        <label>tufA</label>
    </interactant>
    <organismsDiffer>false</organismsDiffer>
    <experiments>3</experiments>
</comment>
<comment type="similarity">
    <text evidence="2">Belongs to the transcriptional regulatory CopG/NikR family.</text>
</comment>
<comment type="sequence caution" evidence="2">
    <conflict type="erroneous initiation">
        <sequence resource="EMBL-CDS" id="BAA04676"/>
    </conflict>
</comment>
<proteinExistence type="evidence at protein level"/>
<evidence type="ECO:0000269" key="1">
    <source>
    </source>
</evidence>
<evidence type="ECO:0000305" key="2"/>
<evidence type="ECO:0007829" key="3">
    <source>
        <dbReference type="PDB" id="1Q5V"/>
    </source>
</evidence>
<evidence type="ECO:0007829" key="4">
    <source>
        <dbReference type="PDB" id="1Q5Y"/>
    </source>
</evidence>
<evidence type="ECO:0007829" key="5">
    <source>
        <dbReference type="PDB" id="2HZA"/>
    </source>
</evidence>
<evidence type="ECO:0007829" key="6">
    <source>
        <dbReference type="PDB" id="2HZV"/>
    </source>
</evidence>
<protein>
    <recommendedName>
        <fullName>Nickel-responsive regulator</fullName>
    </recommendedName>
</protein>
<feature type="chain" id="PRO_0000139274" description="Nickel-responsive regulator">
    <location>
        <begin position="1"/>
        <end position="133"/>
    </location>
</feature>
<feature type="binding site">
    <location>
        <position position="76"/>
    </location>
    <ligand>
        <name>Ni(2+)</name>
        <dbReference type="ChEBI" id="CHEBI:49786"/>
    </ligand>
</feature>
<feature type="binding site">
    <location>
        <position position="87"/>
    </location>
    <ligand>
        <name>Ni(2+)</name>
        <dbReference type="ChEBI" id="CHEBI:49786"/>
    </ligand>
</feature>
<feature type="binding site">
    <location>
        <position position="89"/>
    </location>
    <ligand>
        <name>Ni(2+)</name>
        <dbReference type="ChEBI" id="CHEBI:49786"/>
    </ligand>
</feature>
<feature type="binding site">
    <location>
        <position position="95"/>
    </location>
    <ligand>
        <name>Ni(2+)</name>
        <dbReference type="ChEBI" id="CHEBI:49786"/>
    </ligand>
</feature>
<feature type="mutagenesis site" description="Loss of DNA-binding." evidence="1">
    <original>R</original>
    <variation>A</variation>
    <location>
        <position position="3"/>
    </location>
</feature>
<feature type="sequence conflict" description="In Ref. 6; BAA04676." evidence="2" ref="6">
    <original>KE</original>
    <variation>EGRLSLLLGPLVN</variation>
    <location>
        <begin position="131"/>
        <end position="132"/>
    </location>
</feature>
<feature type="strand" evidence="5">
    <location>
        <begin position="2"/>
        <end position="8"/>
    </location>
</feature>
<feature type="helix" evidence="5">
    <location>
        <begin position="10"/>
        <end position="22"/>
    </location>
</feature>
<feature type="helix" evidence="5">
    <location>
        <begin position="28"/>
        <end position="45"/>
    </location>
</feature>
<feature type="strand" evidence="6">
    <location>
        <begin position="46"/>
        <end position="49"/>
    </location>
</feature>
<feature type="strand" evidence="4">
    <location>
        <begin position="51"/>
        <end position="61"/>
    </location>
</feature>
<feature type="helix" evidence="4">
    <location>
        <begin position="65"/>
        <end position="77"/>
    </location>
</feature>
<feature type="helix" evidence="4">
    <location>
        <begin position="79"/>
        <end position="81"/>
    </location>
</feature>
<feature type="strand" evidence="4">
    <location>
        <begin position="82"/>
        <end position="89"/>
    </location>
</feature>
<feature type="strand" evidence="4">
    <location>
        <begin position="91"/>
        <end position="104"/>
    </location>
</feature>
<feature type="helix" evidence="4">
    <location>
        <begin position="105"/>
        <end position="116"/>
    </location>
</feature>
<feature type="strand" evidence="3">
    <location>
        <begin position="118"/>
        <end position="120"/>
    </location>
</feature>
<feature type="strand" evidence="4">
    <location>
        <begin position="122"/>
        <end position="130"/>
    </location>
</feature>
<organism>
    <name type="scientific">Escherichia coli (strain K12)</name>
    <dbReference type="NCBI Taxonomy" id="83333"/>
    <lineage>
        <taxon>Bacteria</taxon>
        <taxon>Pseudomonadati</taxon>
        <taxon>Pseudomonadota</taxon>
        <taxon>Gammaproteobacteria</taxon>
        <taxon>Enterobacterales</taxon>
        <taxon>Enterobacteriaceae</taxon>
        <taxon>Escherichia</taxon>
    </lineage>
</organism>